<evidence type="ECO:0000255" key="1">
    <source>
        <dbReference type="HAMAP-Rule" id="MF_01318"/>
    </source>
</evidence>
<evidence type="ECO:0000305" key="2"/>
<name>RL1_LACLM</name>
<gene>
    <name evidence="1" type="primary">rplA</name>
    <name type="ordered locus">llmg_2276</name>
</gene>
<dbReference type="EMBL" id="AM406671">
    <property type="protein sequence ID" value="CAL98842.1"/>
    <property type="molecule type" value="Genomic_DNA"/>
</dbReference>
<dbReference type="RefSeq" id="WP_011677073.1">
    <property type="nucleotide sequence ID" value="NC_009004.1"/>
</dbReference>
<dbReference type="SMR" id="A2RNF3"/>
<dbReference type="STRING" id="416870.llmg_2276"/>
<dbReference type="GeneID" id="61110326"/>
<dbReference type="KEGG" id="llm:llmg_2276"/>
<dbReference type="eggNOG" id="COG0081">
    <property type="taxonomic scope" value="Bacteria"/>
</dbReference>
<dbReference type="HOGENOM" id="CLU_062853_0_0_9"/>
<dbReference type="OrthoDB" id="9803740at2"/>
<dbReference type="PhylomeDB" id="A2RNF3"/>
<dbReference type="Proteomes" id="UP000000364">
    <property type="component" value="Chromosome"/>
</dbReference>
<dbReference type="GO" id="GO:0015934">
    <property type="term" value="C:large ribosomal subunit"/>
    <property type="evidence" value="ECO:0007669"/>
    <property type="project" value="InterPro"/>
</dbReference>
<dbReference type="GO" id="GO:0019843">
    <property type="term" value="F:rRNA binding"/>
    <property type="evidence" value="ECO:0007669"/>
    <property type="project" value="UniProtKB-UniRule"/>
</dbReference>
<dbReference type="GO" id="GO:0003735">
    <property type="term" value="F:structural constituent of ribosome"/>
    <property type="evidence" value="ECO:0007669"/>
    <property type="project" value="InterPro"/>
</dbReference>
<dbReference type="GO" id="GO:0000049">
    <property type="term" value="F:tRNA binding"/>
    <property type="evidence" value="ECO:0007669"/>
    <property type="project" value="UniProtKB-KW"/>
</dbReference>
<dbReference type="GO" id="GO:0006417">
    <property type="term" value="P:regulation of translation"/>
    <property type="evidence" value="ECO:0007669"/>
    <property type="project" value="UniProtKB-KW"/>
</dbReference>
<dbReference type="GO" id="GO:0006412">
    <property type="term" value="P:translation"/>
    <property type="evidence" value="ECO:0007669"/>
    <property type="project" value="UniProtKB-UniRule"/>
</dbReference>
<dbReference type="CDD" id="cd00403">
    <property type="entry name" value="Ribosomal_L1"/>
    <property type="match status" value="1"/>
</dbReference>
<dbReference type="FunFam" id="3.40.50.790:FF:000001">
    <property type="entry name" value="50S ribosomal protein L1"/>
    <property type="match status" value="1"/>
</dbReference>
<dbReference type="Gene3D" id="3.30.190.20">
    <property type="match status" value="1"/>
</dbReference>
<dbReference type="Gene3D" id="3.40.50.790">
    <property type="match status" value="1"/>
</dbReference>
<dbReference type="HAMAP" id="MF_01318_B">
    <property type="entry name" value="Ribosomal_uL1_B"/>
    <property type="match status" value="1"/>
</dbReference>
<dbReference type="InterPro" id="IPR005878">
    <property type="entry name" value="Ribosom_uL1_bac-type"/>
</dbReference>
<dbReference type="InterPro" id="IPR002143">
    <property type="entry name" value="Ribosomal_uL1"/>
</dbReference>
<dbReference type="InterPro" id="IPR023674">
    <property type="entry name" value="Ribosomal_uL1-like"/>
</dbReference>
<dbReference type="InterPro" id="IPR028364">
    <property type="entry name" value="Ribosomal_uL1/biogenesis"/>
</dbReference>
<dbReference type="InterPro" id="IPR016095">
    <property type="entry name" value="Ribosomal_uL1_3-a/b-sand"/>
</dbReference>
<dbReference type="InterPro" id="IPR023673">
    <property type="entry name" value="Ribosomal_uL1_CS"/>
</dbReference>
<dbReference type="NCBIfam" id="TIGR01169">
    <property type="entry name" value="rplA_bact"/>
    <property type="match status" value="1"/>
</dbReference>
<dbReference type="PANTHER" id="PTHR36427">
    <property type="entry name" value="54S RIBOSOMAL PROTEIN L1, MITOCHONDRIAL"/>
    <property type="match status" value="1"/>
</dbReference>
<dbReference type="PANTHER" id="PTHR36427:SF3">
    <property type="entry name" value="LARGE RIBOSOMAL SUBUNIT PROTEIN UL1M"/>
    <property type="match status" value="1"/>
</dbReference>
<dbReference type="Pfam" id="PF00687">
    <property type="entry name" value="Ribosomal_L1"/>
    <property type="match status" value="1"/>
</dbReference>
<dbReference type="PIRSF" id="PIRSF002155">
    <property type="entry name" value="Ribosomal_L1"/>
    <property type="match status" value="1"/>
</dbReference>
<dbReference type="SUPFAM" id="SSF56808">
    <property type="entry name" value="Ribosomal protein L1"/>
    <property type="match status" value="1"/>
</dbReference>
<dbReference type="PROSITE" id="PS01199">
    <property type="entry name" value="RIBOSOMAL_L1"/>
    <property type="match status" value="1"/>
</dbReference>
<sequence length="229" mass="23950">MAKKSKALRAAIEKIDATKAYSVEEAVALAKETSFAKFDATVEVAYNLNIDVKKSDQQIRGAMVLPNGTGKTARVLVFAKGAKAEEATAAGADFVGSDELVAKINGGWLDFDVVIATPDMMAVVGRLGRVLGPRNLMPNPKTGTVTMDVTKAVGESKAGKVNYRADKAGNVHVPIGKVSFDTEKLVENFKALNTVIAAAKPAASKGAYITNLSVTTTMGPGVKVDSASF</sequence>
<organism>
    <name type="scientific">Lactococcus lactis subsp. cremoris (strain MG1363)</name>
    <dbReference type="NCBI Taxonomy" id="416870"/>
    <lineage>
        <taxon>Bacteria</taxon>
        <taxon>Bacillati</taxon>
        <taxon>Bacillota</taxon>
        <taxon>Bacilli</taxon>
        <taxon>Lactobacillales</taxon>
        <taxon>Streptococcaceae</taxon>
        <taxon>Lactococcus</taxon>
        <taxon>Lactococcus cremoris subsp. cremoris</taxon>
    </lineage>
</organism>
<comment type="function">
    <text evidence="1">Binds directly to 23S rRNA. The L1 stalk is quite mobile in the ribosome, and is involved in E site tRNA release.</text>
</comment>
<comment type="function">
    <text evidence="1">Protein L1 is also a translational repressor protein, it controls the translation of the L11 operon by binding to its mRNA.</text>
</comment>
<comment type="subunit">
    <text evidence="1">Part of the 50S ribosomal subunit.</text>
</comment>
<comment type="similarity">
    <text evidence="1">Belongs to the universal ribosomal protein uL1 family.</text>
</comment>
<keyword id="KW-0678">Repressor</keyword>
<keyword id="KW-0687">Ribonucleoprotein</keyword>
<keyword id="KW-0689">Ribosomal protein</keyword>
<keyword id="KW-0694">RNA-binding</keyword>
<keyword id="KW-0699">rRNA-binding</keyword>
<keyword id="KW-0810">Translation regulation</keyword>
<keyword id="KW-0820">tRNA-binding</keyword>
<accession>A2RNF3</accession>
<feature type="chain" id="PRO_0000308033" description="Large ribosomal subunit protein uL1">
    <location>
        <begin position="1"/>
        <end position="229"/>
    </location>
</feature>
<protein>
    <recommendedName>
        <fullName evidence="1">Large ribosomal subunit protein uL1</fullName>
    </recommendedName>
    <alternativeName>
        <fullName evidence="2">50S ribosomal protein L1</fullName>
    </alternativeName>
</protein>
<reference key="1">
    <citation type="journal article" date="2007" name="J. Bacteriol.">
        <title>The complete genome sequence of the lactic acid bacterial paradigm Lactococcus lactis subsp. cremoris MG1363.</title>
        <authorList>
            <person name="Wegmann U."/>
            <person name="O'Connell-Motherway M."/>
            <person name="Zomer A."/>
            <person name="Buist G."/>
            <person name="Shearman C."/>
            <person name="Canchaya C."/>
            <person name="Ventura M."/>
            <person name="Goesmann A."/>
            <person name="Gasson M.J."/>
            <person name="Kuipers O.P."/>
            <person name="van Sinderen D."/>
            <person name="Kok J."/>
        </authorList>
    </citation>
    <scope>NUCLEOTIDE SEQUENCE [LARGE SCALE GENOMIC DNA]</scope>
    <source>
        <strain>MG1363</strain>
    </source>
</reference>
<proteinExistence type="inferred from homology"/>